<comment type="catalytic activity">
    <reaction>
        <text>Endohydrolysis of (1-&gt;4)-beta-D-glucosidic linkages in cellulose, lichenin and cereal beta-D-glucans.</text>
        <dbReference type="EC" id="3.2.1.4"/>
    </reaction>
</comment>
<comment type="subcellular location">
    <subcellularLocation>
        <location evidence="1">Secreted</location>
    </subcellularLocation>
</comment>
<comment type="similarity">
    <text evidence="4 6">Belongs to the glycosyl hydrolase 9 (cellulase E) family.</text>
</comment>
<comment type="sequence caution" evidence="6">
    <conflict type="erroneous termination">
        <sequence resource="EMBL" id="AK120536"/>
    </conflict>
    <text>Truncated C-terminus.</text>
</comment>
<comment type="sequence caution" evidence="6">
    <conflict type="frameshift">
        <sequence resource="EMBL" id="AK120536"/>
    </conflict>
</comment>
<feature type="signal peptide" evidence="2">
    <location>
        <begin position="1"/>
        <end position="27"/>
    </location>
</feature>
<feature type="chain" id="PRO_0000249282" description="Endoglucanase 5">
    <location>
        <begin position="28"/>
        <end position="534"/>
    </location>
</feature>
<feature type="region of interest" description="Disordered" evidence="5">
    <location>
        <begin position="515"/>
        <end position="534"/>
    </location>
</feature>
<feature type="active site" description="Nucleophile" evidence="4">
    <location>
        <position position="82"/>
    </location>
</feature>
<feature type="active site" evidence="3">
    <location>
        <position position="432"/>
    </location>
</feature>
<feature type="active site" evidence="1">
    <location>
        <position position="484"/>
    </location>
</feature>
<feature type="active site" evidence="1">
    <location>
        <position position="493"/>
    </location>
</feature>
<dbReference type="EC" id="3.2.1.4"/>
<dbReference type="EMBL" id="AP005412">
    <property type="protein sequence ID" value="BAD38054.1"/>
    <property type="molecule type" value="Genomic_DNA"/>
</dbReference>
<dbReference type="EMBL" id="AP008208">
    <property type="protein sequence ID" value="BAF07821.1"/>
    <property type="molecule type" value="Genomic_DNA"/>
</dbReference>
<dbReference type="EMBL" id="AP014958">
    <property type="protein sequence ID" value="BAS77009.1"/>
    <property type="molecule type" value="Genomic_DNA"/>
</dbReference>
<dbReference type="EMBL" id="AK120536">
    <property type="status" value="NOT_ANNOTATED_CDS"/>
    <property type="molecule type" value="mRNA"/>
</dbReference>
<dbReference type="RefSeq" id="XP_015625427.1">
    <property type="nucleotide sequence ID" value="XM_015769941.1"/>
</dbReference>
<dbReference type="SMR" id="Q67UW5"/>
<dbReference type="FunCoup" id="Q67UW5">
    <property type="interactions" value="20"/>
</dbReference>
<dbReference type="STRING" id="39947.Q67UW5"/>
<dbReference type="CAZy" id="GH9">
    <property type="family name" value="Glycoside Hydrolase Family 9"/>
</dbReference>
<dbReference type="PaxDb" id="39947-Q67UW5"/>
<dbReference type="EnsemblPlants" id="Os02t0151300-01">
    <property type="protein sequence ID" value="Os02t0151300-01"/>
    <property type="gene ID" value="Os02g0151300"/>
</dbReference>
<dbReference type="Gramene" id="Os02t0151300-01">
    <property type="protein sequence ID" value="Os02t0151300-01"/>
    <property type="gene ID" value="Os02g0151300"/>
</dbReference>
<dbReference type="KEGG" id="dosa:Os02g0151300"/>
<dbReference type="eggNOG" id="ENOG502QRF6">
    <property type="taxonomic scope" value="Eukaryota"/>
</dbReference>
<dbReference type="HOGENOM" id="CLU_008926_1_4_1"/>
<dbReference type="InParanoid" id="Q67UW5"/>
<dbReference type="OMA" id="APNELWA"/>
<dbReference type="OrthoDB" id="10257085at2759"/>
<dbReference type="Proteomes" id="UP000000763">
    <property type="component" value="Chromosome 2"/>
</dbReference>
<dbReference type="Proteomes" id="UP000059680">
    <property type="component" value="Chromosome 2"/>
</dbReference>
<dbReference type="GO" id="GO:0005576">
    <property type="term" value="C:extracellular region"/>
    <property type="evidence" value="ECO:0007669"/>
    <property type="project" value="UniProtKB-SubCell"/>
</dbReference>
<dbReference type="GO" id="GO:0008810">
    <property type="term" value="F:cellulase activity"/>
    <property type="evidence" value="ECO:0007669"/>
    <property type="project" value="UniProtKB-EC"/>
</dbReference>
<dbReference type="GO" id="GO:0071555">
    <property type="term" value="P:cell wall organization"/>
    <property type="evidence" value="ECO:0007669"/>
    <property type="project" value="UniProtKB-KW"/>
</dbReference>
<dbReference type="GO" id="GO:0030245">
    <property type="term" value="P:cellulose catabolic process"/>
    <property type="evidence" value="ECO:0007669"/>
    <property type="project" value="UniProtKB-KW"/>
</dbReference>
<dbReference type="FunFam" id="1.50.10.10:FF:000020">
    <property type="entry name" value="Endoglucanase"/>
    <property type="match status" value="1"/>
</dbReference>
<dbReference type="Gene3D" id="1.50.10.10">
    <property type="match status" value="1"/>
</dbReference>
<dbReference type="InterPro" id="IPR008928">
    <property type="entry name" value="6-hairpin_glycosidase_sf"/>
</dbReference>
<dbReference type="InterPro" id="IPR012341">
    <property type="entry name" value="6hp_glycosidase-like_sf"/>
</dbReference>
<dbReference type="InterPro" id="IPR001701">
    <property type="entry name" value="Glyco_hydro_9"/>
</dbReference>
<dbReference type="InterPro" id="IPR018221">
    <property type="entry name" value="Glyco_hydro_9_His_AS"/>
</dbReference>
<dbReference type="PANTHER" id="PTHR22298">
    <property type="entry name" value="ENDO-1,4-BETA-GLUCANASE"/>
    <property type="match status" value="1"/>
</dbReference>
<dbReference type="Pfam" id="PF00759">
    <property type="entry name" value="Glyco_hydro_9"/>
    <property type="match status" value="1"/>
</dbReference>
<dbReference type="SUPFAM" id="SSF48208">
    <property type="entry name" value="Six-hairpin glycosidases"/>
    <property type="match status" value="1"/>
</dbReference>
<dbReference type="PROSITE" id="PS60032">
    <property type="entry name" value="GH9_1"/>
    <property type="match status" value="1"/>
</dbReference>
<dbReference type="PROSITE" id="PS00592">
    <property type="entry name" value="GH9_2"/>
    <property type="match status" value="1"/>
</dbReference>
<protein>
    <recommendedName>
        <fullName>Endoglucanase 5</fullName>
        <ecNumber>3.2.1.4</ecNumber>
    </recommendedName>
    <alternativeName>
        <fullName>Endo-1,4-beta glucanase 5</fullName>
    </alternativeName>
</protein>
<evidence type="ECO:0000250" key="1"/>
<evidence type="ECO:0000255" key="2"/>
<evidence type="ECO:0000255" key="3">
    <source>
        <dbReference type="PROSITE-ProRule" id="PRU10059"/>
    </source>
</evidence>
<evidence type="ECO:0000255" key="4">
    <source>
        <dbReference type="PROSITE-ProRule" id="PRU10140"/>
    </source>
</evidence>
<evidence type="ECO:0000256" key="5">
    <source>
        <dbReference type="SAM" id="MobiDB-lite"/>
    </source>
</evidence>
<evidence type="ECO:0000305" key="6"/>
<reference key="1">
    <citation type="journal article" date="2005" name="Nature">
        <title>The map-based sequence of the rice genome.</title>
        <authorList>
            <consortium name="International rice genome sequencing project (IRGSP)"/>
        </authorList>
    </citation>
    <scope>NUCLEOTIDE SEQUENCE [LARGE SCALE GENOMIC DNA]</scope>
    <source>
        <strain>cv. Nipponbare</strain>
    </source>
</reference>
<reference key="2">
    <citation type="journal article" date="2008" name="Nucleic Acids Res.">
        <title>The rice annotation project database (RAP-DB): 2008 update.</title>
        <authorList>
            <consortium name="The rice annotation project (RAP)"/>
        </authorList>
    </citation>
    <scope>GENOME REANNOTATION</scope>
    <source>
        <strain>cv. Nipponbare</strain>
    </source>
</reference>
<reference key="3">
    <citation type="journal article" date="2013" name="Rice">
        <title>Improvement of the Oryza sativa Nipponbare reference genome using next generation sequence and optical map data.</title>
        <authorList>
            <person name="Kawahara Y."/>
            <person name="de la Bastide M."/>
            <person name="Hamilton J.P."/>
            <person name="Kanamori H."/>
            <person name="McCombie W.R."/>
            <person name="Ouyang S."/>
            <person name="Schwartz D.C."/>
            <person name="Tanaka T."/>
            <person name="Wu J."/>
            <person name="Zhou S."/>
            <person name="Childs K.L."/>
            <person name="Davidson R.M."/>
            <person name="Lin H."/>
            <person name="Quesada-Ocampo L."/>
            <person name="Vaillancourt B."/>
            <person name="Sakai H."/>
            <person name="Lee S.S."/>
            <person name="Kim J."/>
            <person name="Numa H."/>
            <person name="Itoh T."/>
            <person name="Buell C.R."/>
            <person name="Matsumoto T."/>
        </authorList>
    </citation>
    <scope>GENOME REANNOTATION</scope>
    <source>
        <strain>cv. Nipponbare</strain>
    </source>
</reference>
<reference key="4">
    <citation type="journal article" date="2003" name="Science">
        <title>Collection, mapping, and annotation of over 28,000 cDNA clones from japonica rice.</title>
        <authorList>
            <consortium name="The rice full-length cDNA consortium"/>
        </authorList>
    </citation>
    <scope>NUCLEOTIDE SEQUENCE [LARGE SCALE MRNA]</scope>
    <source>
        <strain>cv. Nipponbare</strain>
    </source>
</reference>
<accession>Q67UW5</accession>
<accession>A0A0N7KEP7</accession>
<accession>Q0E3W7</accession>
<sequence length="534" mass="58556">MSDVSGRFVVAAAVVAVSLAMAAAAAAHDYGEALSKSLLYFEAQRSGRLPYNQRVRWRGHSGLTDGLEQGVDLVGGYYDAGDHVKFGLPMAFTVTMLSWSVLEYGEEIAAAGELGHALHAIKWGTDYFIKAHTHPNVLWTQVGDGDSDHYCWQRPEDMTTSRHAYKVDAENPGSEVAAETAAAMAAASIVFRRAGDAHYAHLLLHHAQQLFEFGDKYRGRYDESVEVVKNYYPSSSGYKDELLWAALWLHRATGRREYLDYAVDNADDFGGTGWAVSEFSWDIKYAGLQVLASKLLVEEKHLSSQQREVLEKYRSKAEYYVCSCMGRNPGGAAHNAGRTPAGLLFIRPWNNLQYVSNAAFLLTVYSDVLSYLSLPLLCPDPDAAADEAAPAAADAGEVLEFARSQADYILGTNPMATSYLVGYGEAYPRRVHHRAASSASYARDRDFIGCLQGFDSWYSAAAENPHDLVGAVVGGPNGNDVFTDHRGAYMQTEACTYNTAPMVGVFSRLMELERRRRGEDAPPSSTSPVAEDDL</sequence>
<keyword id="KW-0119">Carbohydrate metabolism</keyword>
<keyword id="KW-0961">Cell wall biogenesis/degradation</keyword>
<keyword id="KW-0136">Cellulose degradation</keyword>
<keyword id="KW-0326">Glycosidase</keyword>
<keyword id="KW-0378">Hydrolase</keyword>
<keyword id="KW-0624">Polysaccharide degradation</keyword>
<keyword id="KW-1185">Reference proteome</keyword>
<keyword id="KW-0964">Secreted</keyword>
<keyword id="KW-0732">Signal</keyword>
<name>GUN5_ORYSJ</name>
<organism>
    <name type="scientific">Oryza sativa subsp. japonica</name>
    <name type="common">Rice</name>
    <dbReference type="NCBI Taxonomy" id="39947"/>
    <lineage>
        <taxon>Eukaryota</taxon>
        <taxon>Viridiplantae</taxon>
        <taxon>Streptophyta</taxon>
        <taxon>Embryophyta</taxon>
        <taxon>Tracheophyta</taxon>
        <taxon>Spermatophyta</taxon>
        <taxon>Magnoliopsida</taxon>
        <taxon>Liliopsida</taxon>
        <taxon>Poales</taxon>
        <taxon>Poaceae</taxon>
        <taxon>BOP clade</taxon>
        <taxon>Oryzoideae</taxon>
        <taxon>Oryzeae</taxon>
        <taxon>Oryzinae</taxon>
        <taxon>Oryza</taxon>
        <taxon>Oryza sativa</taxon>
    </lineage>
</organism>
<proteinExistence type="evidence at transcript level"/>
<gene>
    <name type="ordered locus">Os02g0151300</name>
    <name type="ordered locus">LOC_Os02g05744</name>
    <name type="ORF">OSJNBa0050G13.22</name>
</gene>